<organism>
    <name type="scientific">Haemophilus influenzae (strain PittGG)</name>
    <dbReference type="NCBI Taxonomy" id="374931"/>
    <lineage>
        <taxon>Bacteria</taxon>
        <taxon>Pseudomonadati</taxon>
        <taxon>Pseudomonadota</taxon>
        <taxon>Gammaproteobacteria</taxon>
        <taxon>Pasteurellales</taxon>
        <taxon>Pasteurellaceae</taxon>
        <taxon>Haemophilus</taxon>
    </lineage>
</organism>
<proteinExistence type="inferred from homology"/>
<sequence length="861" mass="97692">MQEQYRPDMIEPKVQQYWVENKVFKAIKDESKEKYYCLSMFPYPSGRLHMGHVRNYTIGDVISRYQRMLGKNVLQPFGWDAFGLPAEGAAIKNKTAPAKWTYENIAYMKKQLQLLGFGFDWDREIATCKPEYYKWEQWFFTELYKKGLVYKKTSTVNWCPNDETVLANEQVHEGCCWRCDTPVEQKEIPQWFIKITDYAEQLLGGLDTLPQWPDMVKTMQRNWIGRSEGVEITFDVANTNEKVAVYTTRPDTFYGVSYLGIAAAHPLASLAAQNNPELAAFIQEAKNAKVAEADLATMEKKGMATGLFAIHPLTGEKLPIWVANFVLMHYGTGAVMAVPAHDQRDFEFAQKYSLPIKQVIAPLADEEIDLTKQAFVEHGKLVNSAEFDGKDFDGAFNGIADKLEKLGVGKRQVNYRLRDWGVSRQRYWGAPIPMLTLENGDVVPAPMEDLPIILPEDVVMDGVKSPIKADPNWAKTTLNGTPALKETDTFDTFMESSWYYARYTCPQYQNGMLDAEEANYWLPVDQYIGGIEHATMHLLYFRFFHKLLRDAGFVTSEEPADKLLCQGMVLADAFYYTSPTNERIWVSPTQVTLERDEKGRIIKATDPEGRELVHSGMTKMSKSKNNGIDPQEMVEKYGADTVRLFMMFASPAEMTLEWQESGVEGAKRFLGRVWNLVYQYQQNPAKTSLDITALSAEQKVLRREVHKTIAKVSDDIGRRQTFNTAIAAVMELMNKLTKAPLDSEQDRAVMAEALSAVVRMLYPITPHICFELWQALGNESAIDTAEWVKADEAAMVEDEKLIVVQVNGKVRGKVTVAADADEDTVKTIAFADENVKKFIDNQHIVKVIYVVGKLLNVVVKP</sequence>
<keyword id="KW-0030">Aminoacyl-tRNA synthetase</keyword>
<keyword id="KW-0067">ATP-binding</keyword>
<keyword id="KW-0963">Cytoplasm</keyword>
<keyword id="KW-0436">Ligase</keyword>
<keyword id="KW-0547">Nucleotide-binding</keyword>
<keyword id="KW-0648">Protein biosynthesis</keyword>
<name>SYL_HAEIG</name>
<reference key="1">
    <citation type="journal article" date="2007" name="Genome Biol.">
        <title>Characterization and modeling of the Haemophilus influenzae core and supragenomes based on the complete genomic sequences of Rd and 12 clinical nontypeable strains.</title>
        <authorList>
            <person name="Hogg J.S."/>
            <person name="Hu F.Z."/>
            <person name="Janto B."/>
            <person name="Boissy R."/>
            <person name="Hayes J."/>
            <person name="Keefe R."/>
            <person name="Post J.C."/>
            <person name="Ehrlich G.D."/>
        </authorList>
    </citation>
    <scope>NUCLEOTIDE SEQUENCE [LARGE SCALE GENOMIC DNA]</scope>
    <source>
        <strain>PittGG</strain>
    </source>
</reference>
<evidence type="ECO:0000255" key="1">
    <source>
        <dbReference type="HAMAP-Rule" id="MF_00049"/>
    </source>
</evidence>
<gene>
    <name evidence="1" type="primary">leuS</name>
    <name type="ordered locus">CGSHiGG_08170</name>
</gene>
<protein>
    <recommendedName>
        <fullName evidence="1">Leucine--tRNA ligase</fullName>
        <ecNumber evidence="1">6.1.1.4</ecNumber>
    </recommendedName>
    <alternativeName>
        <fullName evidence="1">Leucyl-tRNA synthetase</fullName>
        <shortName evidence="1">LeuRS</shortName>
    </alternativeName>
</protein>
<dbReference type="EC" id="6.1.1.4" evidence="1"/>
<dbReference type="EMBL" id="CP000672">
    <property type="protein sequence ID" value="ABR00468.1"/>
    <property type="molecule type" value="Genomic_DNA"/>
</dbReference>
<dbReference type="SMR" id="A5UI62"/>
<dbReference type="KEGG" id="hiq:CGSHiGG_08170"/>
<dbReference type="HOGENOM" id="CLU_004427_0_0_6"/>
<dbReference type="Proteomes" id="UP000001990">
    <property type="component" value="Chromosome"/>
</dbReference>
<dbReference type="GO" id="GO:0005829">
    <property type="term" value="C:cytosol"/>
    <property type="evidence" value="ECO:0007669"/>
    <property type="project" value="TreeGrafter"/>
</dbReference>
<dbReference type="GO" id="GO:0002161">
    <property type="term" value="F:aminoacyl-tRNA deacylase activity"/>
    <property type="evidence" value="ECO:0007669"/>
    <property type="project" value="InterPro"/>
</dbReference>
<dbReference type="GO" id="GO:0005524">
    <property type="term" value="F:ATP binding"/>
    <property type="evidence" value="ECO:0007669"/>
    <property type="project" value="UniProtKB-UniRule"/>
</dbReference>
<dbReference type="GO" id="GO:0004823">
    <property type="term" value="F:leucine-tRNA ligase activity"/>
    <property type="evidence" value="ECO:0007669"/>
    <property type="project" value="UniProtKB-UniRule"/>
</dbReference>
<dbReference type="GO" id="GO:0006429">
    <property type="term" value="P:leucyl-tRNA aminoacylation"/>
    <property type="evidence" value="ECO:0007669"/>
    <property type="project" value="UniProtKB-UniRule"/>
</dbReference>
<dbReference type="CDD" id="cd07958">
    <property type="entry name" value="Anticodon_Ia_Leu_BEm"/>
    <property type="match status" value="1"/>
</dbReference>
<dbReference type="CDD" id="cd00812">
    <property type="entry name" value="LeuRS_core"/>
    <property type="match status" value="1"/>
</dbReference>
<dbReference type="FunFam" id="1.10.730.10:FF:000003">
    <property type="entry name" value="Leucine--tRNA ligase"/>
    <property type="match status" value="1"/>
</dbReference>
<dbReference type="FunFam" id="2.20.28.290:FF:000001">
    <property type="entry name" value="Leucine--tRNA ligase"/>
    <property type="match status" value="1"/>
</dbReference>
<dbReference type="FunFam" id="3.10.20.590:FF:000001">
    <property type="entry name" value="Leucine--tRNA ligase"/>
    <property type="match status" value="1"/>
</dbReference>
<dbReference type="FunFam" id="3.40.50.620:FF:000003">
    <property type="entry name" value="Leucine--tRNA ligase"/>
    <property type="match status" value="1"/>
</dbReference>
<dbReference type="FunFam" id="3.40.50.620:FF:000051">
    <property type="entry name" value="Leucine--tRNA ligase"/>
    <property type="match status" value="1"/>
</dbReference>
<dbReference type="FunFam" id="3.90.740.10:FF:000012">
    <property type="entry name" value="Leucine--tRNA ligase"/>
    <property type="match status" value="1"/>
</dbReference>
<dbReference type="Gene3D" id="2.20.28.290">
    <property type="match status" value="1"/>
</dbReference>
<dbReference type="Gene3D" id="3.10.20.590">
    <property type="match status" value="1"/>
</dbReference>
<dbReference type="Gene3D" id="3.40.50.620">
    <property type="entry name" value="HUPs"/>
    <property type="match status" value="2"/>
</dbReference>
<dbReference type="Gene3D" id="1.10.730.10">
    <property type="entry name" value="Isoleucyl-tRNA Synthetase, Domain 1"/>
    <property type="match status" value="1"/>
</dbReference>
<dbReference type="Gene3D" id="3.90.740.10">
    <property type="entry name" value="Valyl/Leucyl/Isoleucyl-tRNA synthetase, editing domain"/>
    <property type="match status" value="1"/>
</dbReference>
<dbReference type="HAMAP" id="MF_00049_B">
    <property type="entry name" value="Leu_tRNA_synth_B"/>
    <property type="match status" value="1"/>
</dbReference>
<dbReference type="InterPro" id="IPR001412">
    <property type="entry name" value="aa-tRNA-synth_I_CS"/>
</dbReference>
<dbReference type="InterPro" id="IPR002300">
    <property type="entry name" value="aa-tRNA-synth_Ia"/>
</dbReference>
<dbReference type="InterPro" id="IPR002302">
    <property type="entry name" value="Leu-tRNA-ligase"/>
</dbReference>
<dbReference type="InterPro" id="IPR025709">
    <property type="entry name" value="Leu_tRNA-synth_edit"/>
</dbReference>
<dbReference type="InterPro" id="IPR013155">
    <property type="entry name" value="M/V/L/I-tRNA-synth_anticd-bd"/>
</dbReference>
<dbReference type="InterPro" id="IPR015413">
    <property type="entry name" value="Methionyl/Leucyl_tRNA_Synth"/>
</dbReference>
<dbReference type="InterPro" id="IPR014729">
    <property type="entry name" value="Rossmann-like_a/b/a_fold"/>
</dbReference>
<dbReference type="InterPro" id="IPR009080">
    <property type="entry name" value="tRNAsynth_Ia_anticodon-bd"/>
</dbReference>
<dbReference type="InterPro" id="IPR009008">
    <property type="entry name" value="Val/Leu/Ile-tRNA-synth_edit"/>
</dbReference>
<dbReference type="NCBIfam" id="TIGR00396">
    <property type="entry name" value="leuS_bact"/>
    <property type="match status" value="1"/>
</dbReference>
<dbReference type="PANTHER" id="PTHR43740:SF2">
    <property type="entry name" value="LEUCINE--TRNA LIGASE, MITOCHONDRIAL"/>
    <property type="match status" value="1"/>
</dbReference>
<dbReference type="PANTHER" id="PTHR43740">
    <property type="entry name" value="LEUCYL-TRNA SYNTHETASE"/>
    <property type="match status" value="1"/>
</dbReference>
<dbReference type="Pfam" id="PF08264">
    <property type="entry name" value="Anticodon_1"/>
    <property type="match status" value="1"/>
</dbReference>
<dbReference type="Pfam" id="PF00133">
    <property type="entry name" value="tRNA-synt_1"/>
    <property type="match status" value="2"/>
</dbReference>
<dbReference type="Pfam" id="PF13603">
    <property type="entry name" value="tRNA-synt_1_2"/>
    <property type="match status" value="1"/>
</dbReference>
<dbReference type="Pfam" id="PF09334">
    <property type="entry name" value="tRNA-synt_1g"/>
    <property type="match status" value="1"/>
</dbReference>
<dbReference type="PRINTS" id="PR00985">
    <property type="entry name" value="TRNASYNTHLEU"/>
</dbReference>
<dbReference type="SUPFAM" id="SSF47323">
    <property type="entry name" value="Anticodon-binding domain of a subclass of class I aminoacyl-tRNA synthetases"/>
    <property type="match status" value="1"/>
</dbReference>
<dbReference type="SUPFAM" id="SSF52374">
    <property type="entry name" value="Nucleotidylyl transferase"/>
    <property type="match status" value="1"/>
</dbReference>
<dbReference type="SUPFAM" id="SSF50677">
    <property type="entry name" value="ValRS/IleRS/LeuRS editing domain"/>
    <property type="match status" value="1"/>
</dbReference>
<dbReference type="PROSITE" id="PS00178">
    <property type="entry name" value="AA_TRNA_LIGASE_I"/>
    <property type="match status" value="1"/>
</dbReference>
<accession>A5UI62</accession>
<feature type="chain" id="PRO_1000009349" description="Leucine--tRNA ligase">
    <location>
        <begin position="1"/>
        <end position="861"/>
    </location>
</feature>
<feature type="short sequence motif" description="'HIGH' region">
    <location>
        <begin position="42"/>
        <end position="52"/>
    </location>
</feature>
<feature type="short sequence motif" description="'KMSKS' region">
    <location>
        <begin position="619"/>
        <end position="623"/>
    </location>
</feature>
<feature type="binding site" evidence="1">
    <location>
        <position position="622"/>
    </location>
    <ligand>
        <name>ATP</name>
        <dbReference type="ChEBI" id="CHEBI:30616"/>
    </ligand>
</feature>
<comment type="catalytic activity">
    <reaction evidence="1">
        <text>tRNA(Leu) + L-leucine + ATP = L-leucyl-tRNA(Leu) + AMP + diphosphate</text>
        <dbReference type="Rhea" id="RHEA:11688"/>
        <dbReference type="Rhea" id="RHEA-COMP:9613"/>
        <dbReference type="Rhea" id="RHEA-COMP:9622"/>
        <dbReference type="ChEBI" id="CHEBI:30616"/>
        <dbReference type="ChEBI" id="CHEBI:33019"/>
        <dbReference type="ChEBI" id="CHEBI:57427"/>
        <dbReference type="ChEBI" id="CHEBI:78442"/>
        <dbReference type="ChEBI" id="CHEBI:78494"/>
        <dbReference type="ChEBI" id="CHEBI:456215"/>
        <dbReference type="EC" id="6.1.1.4"/>
    </reaction>
</comment>
<comment type="subcellular location">
    <subcellularLocation>
        <location evidence="1">Cytoplasm</location>
    </subcellularLocation>
</comment>
<comment type="similarity">
    <text evidence="1">Belongs to the class-I aminoacyl-tRNA synthetase family.</text>
</comment>